<comment type="function">
    <text evidence="1">Nucleotide-binding protein.</text>
</comment>
<comment type="similarity">
    <text evidence="1">Belongs to the YajQ family.</text>
</comment>
<organism>
    <name type="scientific">Shewanella denitrificans (strain OS217 / ATCC BAA-1090 / DSM 15013)</name>
    <dbReference type="NCBI Taxonomy" id="318161"/>
    <lineage>
        <taxon>Bacteria</taxon>
        <taxon>Pseudomonadati</taxon>
        <taxon>Pseudomonadota</taxon>
        <taxon>Gammaproteobacteria</taxon>
        <taxon>Alteromonadales</taxon>
        <taxon>Shewanellaceae</taxon>
        <taxon>Shewanella</taxon>
    </lineage>
</organism>
<dbReference type="EMBL" id="CP000302">
    <property type="protein sequence ID" value="ABE54060.1"/>
    <property type="molecule type" value="Genomic_DNA"/>
</dbReference>
<dbReference type="RefSeq" id="WP_011495225.1">
    <property type="nucleotide sequence ID" value="NC_007954.1"/>
</dbReference>
<dbReference type="SMR" id="Q12R66"/>
<dbReference type="STRING" id="318161.Sden_0770"/>
<dbReference type="KEGG" id="sdn:Sden_0770"/>
<dbReference type="eggNOG" id="COG1666">
    <property type="taxonomic scope" value="Bacteria"/>
</dbReference>
<dbReference type="HOGENOM" id="CLU_099839_1_0_6"/>
<dbReference type="OrthoDB" id="9801447at2"/>
<dbReference type="Proteomes" id="UP000001982">
    <property type="component" value="Chromosome"/>
</dbReference>
<dbReference type="GO" id="GO:0005829">
    <property type="term" value="C:cytosol"/>
    <property type="evidence" value="ECO:0007669"/>
    <property type="project" value="TreeGrafter"/>
</dbReference>
<dbReference type="GO" id="GO:0000166">
    <property type="term" value="F:nucleotide binding"/>
    <property type="evidence" value="ECO:0007669"/>
    <property type="project" value="TreeGrafter"/>
</dbReference>
<dbReference type="CDD" id="cd11740">
    <property type="entry name" value="YajQ_like"/>
    <property type="match status" value="1"/>
</dbReference>
<dbReference type="FunFam" id="3.30.70.860:FF:000001">
    <property type="entry name" value="UPF0234 protein YajQ"/>
    <property type="match status" value="1"/>
</dbReference>
<dbReference type="Gene3D" id="3.30.70.860">
    <property type="match status" value="1"/>
</dbReference>
<dbReference type="Gene3D" id="3.30.70.990">
    <property type="entry name" value="YajQ-like, domain 2"/>
    <property type="match status" value="1"/>
</dbReference>
<dbReference type="HAMAP" id="MF_00632">
    <property type="entry name" value="YajQ"/>
    <property type="match status" value="1"/>
</dbReference>
<dbReference type="InterPro" id="IPR007551">
    <property type="entry name" value="DUF520"/>
</dbReference>
<dbReference type="InterPro" id="IPR035571">
    <property type="entry name" value="UPF0234-like_C"/>
</dbReference>
<dbReference type="InterPro" id="IPR035570">
    <property type="entry name" value="UPF0234_N"/>
</dbReference>
<dbReference type="InterPro" id="IPR036183">
    <property type="entry name" value="YajQ-like_sf"/>
</dbReference>
<dbReference type="NCBIfam" id="NF003819">
    <property type="entry name" value="PRK05412.1"/>
    <property type="match status" value="1"/>
</dbReference>
<dbReference type="PANTHER" id="PTHR30476">
    <property type="entry name" value="UPF0234 PROTEIN YAJQ"/>
    <property type="match status" value="1"/>
</dbReference>
<dbReference type="PANTHER" id="PTHR30476:SF0">
    <property type="entry name" value="UPF0234 PROTEIN YAJQ"/>
    <property type="match status" value="1"/>
</dbReference>
<dbReference type="Pfam" id="PF04461">
    <property type="entry name" value="DUF520"/>
    <property type="match status" value="1"/>
</dbReference>
<dbReference type="SUPFAM" id="SSF89963">
    <property type="entry name" value="YajQ-like"/>
    <property type="match status" value="2"/>
</dbReference>
<accession>Q12R66</accession>
<protein>
    <recommendedName>
        <fullName evidence="1">Nucleotide-binding protein Sden_0770</fullName>
    </recommendedName>
</protein>
<name>Y770_SHEDO</name>
<feature type="chain" id="PRO_0000261972" description="Nucleotide-binding protein Sden_0770">
    <location>
        <begin position="1"/>
        <end position="161"/>
    </location>
</feature>
<keyword id="KW-0547">Nucleotide-binding</keyword>
<keyword id="KW-1185">Reference proteome</keyword>
<gene>
    <name type="ordered locus">Sden_0770</name>
</gene>
<reference key="1">
    <citation type="submission" date="2006-03" db="EMBL/GenBank/DDBJ databases">
        <title>Complete sequence of Shewanella denitrificans OS217.</title>
        <authorList>
            <consortium name="US DOE Joint Genome Institute"/>
            <person name="Copeland A."/>
            <person name="Lucas S."/>
            <person name="Lapidus A."/>
            <person name="Barry K."/>
            <person name="Detter J.C."/>
            <person name="Glavina del Rio T."/>
            <person name="Hammon N."/>
            <person name="Israni S."/>
            <person name="Dalin E."/>
            <person name="Tice H."/>
            <person name="Pitluck S."/>
            <person name="Brettin T."/>
            <person name="Bruce D."/>
            <person name="Han C."/>
            <person name="Tapia R."/>
            <person name="Gilna P."/>
            <person name="Kiss H."/>
            <person name="Schmutz J."/>
            <person name="Larimer F."/>
            <person name="Land M."/>
            <person name="Hauser L."/>
            <person name="Kyrpides N."/>
            <person name="Lykidis A."/>
            <person name="Richardson P."/>
        </authorList>
    </citation>
    <scope>NUCLEOTIDE SEQUENCE [LARGE SCALE GENOMIC DNA]</scope>
    <source>
        <strain>OS217 / ATCC BAA-1090 / DSM 15013</strain>
    </source>
</reference>
<evidence type="ECO:0000255" key="1">
    <source>
        <dbReference type="HAMAP-Rule" id="MF_00632"/>
    </source>
</evidence>
<sequence>MPSMDIVSEVNEEELRNAVENSRRELSSRFDFRGKEAEIEHKEFIVTLKAEDDFQCRQLVDILRIQLSKRDVDPSSMEVDDKAIHSGKTFSLKVSFKQGIDSLVAKKLVKQIKDSKLKVQAAIQGDTVRVTGKKRDDLQAVMRLAKESELGQPFQFNNFRD</sequence>
<proteinExistence type="inferred from homology"/>